<gene>
    <name evidence="1" type="primary">pyrB</name>
    <name type="ordered locus">str0525</name>
</gene>
<dbReference type="EC" id="2.1.3.2" evidence="1"/>
<dbReference type="EMBL" id="CP000024">
    <property type="protein sequence ID" value="AAV62122.1"/>
    <property type="molecule type" value="Genomic_DNA"/>
</dbReference>
<dbReference type="RefSeq" id="WP_002947266.1">
    <property type="nucleotide sequence ID" value="NC_006449.1"/>
</dbReference>
<dbReference type="SMR" id="Q5M0X1"/>
<dbReference type="KEGG" id="stc:str0525"/>
<dbReference type="HOGENOM" id="CLU_043846_2_1_9"/>
<dbReference type="UniPathway" id="UPA00070">
    <property type="reaction ID" value="UER00116"/>
</dbReference>
<dbReference type="GO" id="GO:0005829">
    <property type="term" value="C:cytosol"/>
    <property type="evidence" value="ECO:0007669"/>
    <property type="project" value="TreeGrafter"/>
</dbReference>
<dbReference type="GO" id="GO:0016597">
    <property type="term" value="F:amino acid binding"/>
    <property type="evidence" value="ECO:0007669"/>
    <property type="project" value="InterPro"/>
</dbReference>
<dbReference type="GO" id="GO:0004070">
    <property type="term" value="F:aspartate carbamoyltransferase activity"/>
    <property type="evidence" value="ECO:0007669"/>
    <property type="project" value="UniProtKB-UniRule"/>
</dbReference>
<dbReference type="GO" id="GO:0006207">
    <property type="term" value="P:'de novo' pyrimidine nucleobase biosynthetic process"/>
    <property type="evidence" value="ECO:0007669"/>
    <property type="project" value="InterPro"/>
</dbReference>
<dbReference type="GO" id="GO:0044205">
    <property type="term" value="P:'de novo' UMP biosynthetic process"/>
    <property type="evidence" value="ECO:0007669"/>
    <property type="project" value="UniProtKB-UniRule"/>
</dbReference>
<dbReference type="GO" id="GO:0006520">
    <property type="term" value="P:amino acid metabolic process"/>
    <property type="evidence" value="ECO:0007669"/>
    <property type="project" value="InterPro"/>
</dbReference>
<dbReference type="FunFam" id="3.40.50.1370:FF:000011">
    <property type="entry name" value="Aspartate carbamoyltransferase"/>
    <property type="match status" value="1"/>
</dbReference>
<dbReference type="Gene3D" id="3.40.50.1370">
    <property type="entry name" value="Aspartate/ornithine carbamoyltransferase"/>
    <property type="match status" value="2"/>
</dbReference>
<dbReference type="HAMAP" id="MF_00001">
    <property type="entry name" value="Asp_carb_tr"/>
    <property type="match status" value="1"/>
</dbReference>
<dbReference type="InterPro" id="IPR006132">
    <property type="entry name" value="Asp/Orn_carbamoyltranf_P-bd"/>
</dbReference>
<dbReference type="InterPro" id="IPR006130">
    <property type="entry name" value="Asp/Orn_carbamoylTrfase"/>
</dbReference>
<dbReference type="InterPro" id="IPR036901">
    <property type="entry name" value="Asp/Orn_carbamoylTrfase_sf"/>
</dbReference>
<dbReference type="InterPro" id="IPR002082">
    <property type="entry name" value="Asp_carbamoyltransf"/>
</dbReference>
<dbReference type="InterPro" id="IPR006131">
    <property type="entry name" value="Asp_carbamoyltransf_Asp/Orn-bd"/>
</dbReference>
<dbReference type="NCBIfam" id="TIGR00670">
    <property type="entry name" value="asp_carb_tr"/>
    <property type="match status" value="1"/>
</dbReference>
<dbReference type="NCBIfam" id="NF002032">
    <property type="entry name" value="PRK00856.1"/>
    <property type="match status" value="1"/>
</dbReference>
<dbReference type="PANTHER" id="PTHR45753:SF6">
    <property type="entry name" value="ASPARTATE CARBAMOYLTRANSFERASE"/>
    <property type="match status" value="1"/>
</dbReference>
<dbReference type="PANTHER" id="PTHR45753">
    <property type="entry name" value="ORNITHINE CARBAMOYLTRANSFERASE, MITOCHONDRIAL"/>
    <property type="match status" value="1"/>
</dbReference>
<dbReference type="Pfam" id="PF00185">
    <property type="entry name" value="OTCace"/>
    <property type="match status" value="1"/>
</dbReference>
<dbReference type="Pfam" id="PF02729">
    <property type="entry name" value="OTCace_N"/>
    <property type="match status" value="1"/>
</dbReference>
<dbReference type="PRINTS" id="PR00100">
    <property type="entry name" value="AOTCASE"/>
</dbReference>
<dbReference type="PRINTS" id="PR00101">
    <property type="entry name" value="ATCASE"/>
</dbReference>
<dbReference type="SUPFAM" id="SSF53671">
    <property type="entry name" value="Aspartate/ornithine carbamoyltransferase"/>
    <property type="match status" value="1"/>
</dbReference>
<dbReference type="PROSITE" id="PS00097">
    <property type="entry name" value="CARBAMOYLTRANSFERASE"/>
    <property type="match status" value="1"/>
</dbReference>
<organism>
    <name type="scientific">Streptococcus thermophilus (strain CNRZ 1066)</name>
    <dbReference type="NCBI Taxonomy" id="299768"/>
    <lineage>
        <taxon>Bacteria</taxon>
        <taxon>Bacillati</taxon>
        <taxon>Bacillota</taxon>
        <taxon>Bacilli</taxon>
        <taxon>Lactobacillales</taxon>
        <taxon>Streptococcaceae</taxon>
        <taxon>Streptococcus</taxon>
    </lineage>
</organism>
<feature type="chain" id="PRO_0000113212" description="Aspartate carbamoyltransferase catalytic subunit">
    <location>
        <begin position="1"/>
        <end position="308"/>
    </location>
</feature>
<feature type="binding site" evidence="1">
    <location>
        <position position="59"/>
    </location>
    <ligand>
        <name>carbamoyl phosphate</name>
        <dbReference type="ChEBI" id="CHEBI:58228"/>
    </ligand>
</feature>
<feature type="binding site" evidence="1">
    <location>
        <position position="60"/>
    </location>
    <ligand>
        <name>carbamoyl phosphate</name>
        <dbReference type="ChEBI" id="CHEBI:58228"/>
    </ligand>
</feature>
<feature type="binding site" evidence="1">
    <location>
        <position position="87"/>
    </location>
    <ligand>
        <name>L-aspartate</name>
        <dbReference type="ChEBI" id="CHEBI:29991"/>
    </ligand>
</feature>
<feature type="binding site" evidence="1">
    <location>
        <position position="109"/>
    </location>
    <ligand>
        <name>carbamoyl phosphate</name>
        <dbReference type="ChEBI" id="CHEBI:58228"/>
    </ligand>
</feature>
<feature type="binding site" evidence="1">
    <location>
        <position position="139"/>
    </location>
    <ligand>
        <name>carbamoyl phosphate</name>
        <dbReference type="ChEBI" id="CHEBI:58228"/>
    </ligand>
</feature>
<feature type="binding site" evidence="1">
    <location>
        <position position="142"/>
    </location>
    <ligand>
        <name>carbamoyl phosphate</name>
        <dbReference type="ChEBI" id="CHEBI:58228"/>
    </ligand>
</feature>
<feature type="binding site" evidence="1">
    <location>
        <position position="172"/>
    </location>
    <ligand>
        <name>L-aspartate</name>
        <dbReference type="ChEBI" id="CHEBI:29991"/>
    </ligand>
</feature>
<feature type="binding site" evidence="1">
    <location>
        <position position="224"/>
    </location>
    <ligand>
        <name>L-aspartate</name>
        <dbReference type="ChEBI" id="CHEBI:29991"/>
    </ligand>
</feature>
<feature type="binding site" evidence="1">
    <location>
        <position position="265"/>
    </location>
    <ligand>
        <name>carbamoyl phosphate</name>
        <dbReference type="ChEBI" id="CHEBI:58228"/>
    </ligand>
</feature>
<feature type="binding site" evidence="1">
    <location>
        <position position="266"/>
    </location>
    <ligand>
        <name>carbamoyl phosphate</name>
        <dbReference type="ChEBI" id="CHEBI:58228"/>
    </ligand>
</feature>
<keyword id="KW-0665">Pyrimidine biosynthesis</keyword>
<keyword id="KW-0808">Transferase</keyword>
<evidence type="ECO:0000255" key="1">
    <source>
        <dbReference type="HAMAP-Rule" id="MF_00001"/>
    </source>
</evidence>
<accession>Q5M0X1</accession>
<sequence length="308" mass="34560">MAIADGKVSLKHLVTMETLTNEEVLGMIRRGGDFKNGRADFQLDRQYFAANLFFENSTRTHKSFEVAEKKLGLDVIEFDAGTSSVNKGETLYDTILTMSALGVDICVVRHSEVDYYKQLIDSRTIQTSIVNGGDGSGQHPSQCLLDLMTIYEEFGTFGNLKICIAGDITHSRVAKSNMRILKRLGAQIYFAGPTEWYSSEFDVYGQHVAIDDVIEDLNVLMLLRVQHERHRNDKGFSKEEYHTLYGLTEERYAKLADQAIIMHPAPVNRDVEIADSLVEAPKARIVTQMQNGVFVRMAIIEAILNGKA</sequence>
<proteinExistence type="inferred from homology"/>
<protein>
    <recommendedName>
        <fullName evidence="1">Aspartate carbamoyltransferase catalytic subunit</fullName>
        <ecNumber evidence="1">2.1.3.2</ecNumber>
    </recommendedName>
    <alternativeName>
        <fullName evidence="1">Aspartate transcarbamylase</fullName>
        <shortName evidence="1">ATCase</shortName>
    </alternativeName>
</protein>
<reference key="1">
    <citation type="journal article" date="2004" name="Nat. Biotechnol.">
        <title>Complete sequence and comparative genome analysis of the dairy bacterium Streptococcus thermophilus.</title>
        <authorList>
            <person name="Bolotin A."/>
            <person name="Quinquis B."/>
            <person name="Renault P."/>
            <person name="Sorokin A."/>
            <person name="Ehrlich S.D."/>
            <person name="Kulakauskas S."/>
            <person name="Lapidus A."/>
            <person name="Goltsman E."/>
            <person name="Mazur M."/>
            <person name="Pusch G.D."/>
            <person name="Fonstein M."/>
            <person name="Overbeek R."/>
            <person name="Kyprides N."/>
            <person name="Purnelle B."/>
            <person name="Prozzi D."/>
            <person name="Ngui K."/>
            <person name="Masuy D."/>
            <person name="Hancy F."/>
            <person name="Burteau S."/>
            <person name="Boutry M."/>
            <person name="Delcour J."/>
            <person name="Goffeau A."/>
            <person name="Hols P."/>
        </authorList>
    </citation>
    <scope>NUCLEOTIDE SEQUENCE [LARGE SCALE GENOMIC DNA]</scope>
    <source>
        <strain>CNRZ 1066</strain>
    </source>
</reference>
<name>PYRB_STRT1</name>
<comment type="function">
    <text evidence="1">Catalyzes the condensation of carbamoyl phosphate and aspartate to form carbamoyl aspartate and inorganic phosphate, the committed step in the de novo pyrimidine nucleotide biosynthesis pathway.</text>
</comment>
<comment type="catalytic activity">
    <reaction evidence="1">
        <text>carbamoyl phosphate + L-aspartate = N-carbamoyl-L-aspartate + phosphate + H(+)</text>
        <dbReference type="Rhea" id="RHEA:20013"/>
        <dbReference type="ChEBI" id="CHEBI:15378"/>
        <dbReference type="ChEBI" id="CHEBI:29991"/>
        <dbReference type="ChEBI" id="CHEBI:32814"/>
        <dbReference type="ChEBI" id="CHEBI:43474"/>
        <dbReference type="ChEBI" id="CHEBI:58228"/>
        <dbReference type="EC" id="2.1.3.2"/>
    </reaction>
</comment>
<comment type="pathway">
    <text evidence="1">Pyrimidine metabolism; UMP biosynthesis via de novo pathway; (S)-dihydroorotate from bicarbonate: step 2/3.</text>
</comment>
<comment type="subunit">
    <text evidence="1">Heterododecamer (2C3:3R2) of six catalytic PyrB chains organized as two trimers (C3), and six regulatory PyrI chains organized as three dimers (R2).</text>
</comment>
<comment type="similarity">
    <text evidence="1">Belongs to the aspartate/ornithine carbamoyltransferase superfamily. ATCase family.</text>
</comment>